<organism>
    <name type="scientific">Pyrococcus abyssi (strain GE5 / Orsay)</name>
    <dbReference type="NCBI Taxonomy" id="272844"/>
    <lineage>
        <taxon>Archaea</taxon>
        <taxon>Methanobacteriati</taxon>
        <taxon>Methanobacteriota</taxon>
        <taxon>Thermococci</taxon>
        <taxon>Thermococcales</taxon>
        <taxon>Thermococcaceae</taxon>
        <taxon>Pyrococcus</taxon>
    </lineage>
</organism>
<name>PORD_PYRAB</name>
<reference key="1">
    <citation type="journal article" date="2003" name="Mol. Microbiol.">
        <title>An integrated analysis of the genome of the hyperthermophilic archaeon Pyrococcus abyssi.</title>
        <authorList>
            <person name="Cohen G.N."/>
            <person name="Barbe V."/>
            <person name="Flament D."/>
            <person name="Galperin M."/>
            <person name="Heilig R."/>
            <person name="Lecompte O."/>
            <person name="Poch O."/>
            <person name="Prieur D."/>
            <person name="Querellou J."/>
            <person name="Ripp R."/>
            <person name="Thierry J.-C."/>
            <person name="Van der Oost J."/>
            <person name="Weissenbach J."/>
            <person name="Zivanovic Y."/>
            <person name="Forterre P."/>
        </authorList>
    </citation>
    <scope>NUCLEOTIDE SEQUENCE [LARGE SCALE GENOMIC DNA]</scope>
    <source>
        <strain>GE5 / Orsay</strain>
    </source>
</reference>
<reference key="2">
    <citation type="journal article" date="2012" name="Curr. Microbiol.">
        <title>Re-annotation of two hyperthermophilic archaea Pyrococcus abyssi GE5 and Pyrococcus furiosus DSM 3638.</title>
        <authorList>
            <person name="Gao J."/>
            <person name="Wang J."/>
        </authorList>
    </citation>
    <scope>GENOME REANNOTATION</scope>
    <source>
        <strain>GE5 / Orsay</strain>
    </source>
</reference>
<comment type="cofactor">
    <cofactor evidence="2">
        <name>[4Fe-4S] cluster</name>
        <dbReference type="ChEBI" id="CHEBI:49883"/>
    </cofactor>
    <text evidence="2">Binds 2 [4Fe-4S] clusters.</text>
</comment>
<comment type="subunit">
    <text evidence="1">Heterotetramer of one alpha, one beta, one delta and one gamma chain.</text>
</comment>
<keyword id="KW-0004">4Fe-4S</keyword>
<keyword id="KW-0249">Electron transport</keyword>
<keyword id="KW-0408">Iron</keyword>
<keyword id="KW-0411">Iron-sulfur</keyword>
<keyword id="KW-0479">Metal-binding</keyword>
<keyword id="KW-0677">Repeat</keyword>
<keyword id="KW-0813">Transport</keyword>
<sequence length="105" mass="11982">MAESPFKADIERAQKELTEKMTPGAIAYIPGSSVINKTGSWRVFRPEFKKDKCVRCFLCYIYCPEPAIYLDEEGYPVFDYDYCKGCGICANECPTNAIEMVREVK</sequence>
<accession>Q9UYZ3</accession>
<accession>G8ZHH0</accession>
<gene>
    <name type="primary">porD</name>
    <name type="ordered locus">PYRAB13640</name>
    <name type="ORF">PAB1474</name>
</gene>
<feature type="initiator methionine" description="Removed" evidence="1">
    <location>
        <position position="1"/>
    </location>
</feature>
<feature type="chain" id="PRO_0000099921" description="Pyruvate synthase subunit PorD">
    <location>
        <begin position="2"/>
        <end position="105"/>
    </location>
</feature>
<feature type="domain" description="4Fe-4S ferredoxin-type 1" evidence="3">
    <location>
        <begin position="44"/>
        <end position="73"/>
    </location>
</feature>
<feature type="domain" description="4Fe-4S ferredoxin-type 2" evidence="3">
    <location>
        <begin position="74"/>
        <end position="103"/>
    </location>
</feature>
<feature type="binding site" evidence="2">
    <location>
        <position position="53"/>
    </location>
    <ligand>
        <name>[4Fe-4S] cluster</name>
        <dbReference type="ChEBI" id="CHEBI:49883"/>
        <label>1</label>
    </ligand>
</feature>
<feature type="binding site" evidence="2">
    <location>
        <position position="56"/>
    </location>
    <ligand>
        <name>[4Fe-4S] cluster</name>
        <dbReference type="ChEBI" id="CHEBI:49883"/>
        <label>1</label>
    </ligand>
</feature>
<feature type="binding site" evidence="2">
    <location>
        <position position="59"/>
    </location>
    <ligand>
        <name>[4Fe-4S] cluster</name>
        <dbReference type="ChEBI" id="CHEBI:49883"/>
        <label>1</label>
    </ligand>
</feature>
<feature type="binding site" evidence="2">
    <location>
        <position position="63"/>
    </location>
    <ligand>
        <name>[4Fe-4S] cluster</name>
        <dbReference type="ChEBI" id="CHEBI:49883"/>
        <label>2</label>
    </ligand>
</feature>
<feature type="binding site" evidence="2">
    <location>
        <position position="83"/>
    </location>
    <ligand>
        <name>[4Fe-4S] cluster</name>
        <dbReference type="ChEBI" id="CHEBI:49883"/>
        <label>2</label>
    </ligand>
</feature>
<feature type="binding site" evidence="2">
    <location>
        <position position="86"/>
    </location>
    <ligand>
        <name>[4Fe-4S] cluster</name>
        <dbReference type="ChEBI" id="CHEBI:49883"/>
        <label>2</label>
    </ligand>
</feature>
<feature type="binding site" evidence="2">
    <location>
        <position position="89"/>
    </location>
    <ligand>
        <name>[4Fe-4S] cluster</name>
        <dbReference type="ChEBI" id="CHEBI:49883"/>
        <label>2</label>
    </ligand>
</feature>
<feature type="binding site" evidence="2">
    <location>
        <position position="93"/>
    </location>
    <ligand>
        <name>[4Fe-4S] cluster</name>
        <dbReference type="ChEBI" id="CHEBI:49883"/>
        <label>1</label>
    </ligand>
</feature>
<proteinExistence type="inferred from homology"/>
<evidence type="ECO:0000250" key="1"/>
<evidence type="ECO:0000250" key="2">
    <source>
        <dbReference type="UniProtKB" id="P94692"/>
    </source>
</evidence>
<evidence type="ECO:0000255" key="3">
    <source>
        <dbReference type="PROSITE-ProRule" id="PRU00711"/>
    </source>
</evidence>
<dbReference type="EMBL" id="AJ248287">
    <property type="protein sequence ID" value="CAB50269.1"/>
    <property type="molecule type" value="Genomic_DNA"/>
</dbReference>
<dbReference type="EMBL" id="HE613800">
    <property type="protein sequence ID" value="CCE70807.1"/>
    <property type="molecule type" value="Genomic_DNA"/>
</dbReference>
<dbReference type="PIR" id="H75046">
    <property type="entry name" value="H75046"/>
</dbReference>
<dbReference type="RefSeq" id="WP_010868479.1">
    <property type="nucleotide sequence ID" value="NC_000868.1"/>
</dbReference>
<dbReference type="SMR" id="Q9UYZ3"/>
<dbReference type="STRING" id="272844.PAB1474"/>
<dbReference type="KEGG" id="pab:PAB1474"/>
<dbReference type="PATRIC" id="fig|272844.11.peg.1450"/>
<dbReference type="eggNOG" id="arCOG01605">
    <property type="taxonomic scope" value="Archaea"/>
</dbReference>
<dbReference type="HOGENOM" id="CLU_139698_1_1_2"/>
<dbReference type="OrthoDB" id="23478at2157"/>
<dbReference type="PhylomeDB" id="Q9UYZ3"/>
<dbReference type="Proteomes" id="UP000000810">
    <property type="component" value="Chromosome"/>
</dbReference>
<dbReference type="Proteomes" id="UP000009139">
    <property type="component" value="Chromosome"/>
</dbReference>
<dbReference type="GO" id="GO:0051539">
    <property type="term" value="F:4 iron, 4 sulfur cluster binding"/>
    <property type="evidence" value="ECO:0007669"/>
    <property type="project" value="UniProtKB-KW"/>
</dbReference>
<dbReference type="GO" id="GO:0046872">
    <property type="term" value="F:metal ion binding"/>
    <property type="evidence" value="ECO:0007669"/>
    <property type="project" value="UniProtKB-KW"/>
</dbReference>
<dbReference type="GO" id="GO:0016625">
    <property type="term" value="F:oxidoreductase activity, acting on the aldehyde or oxo group of donors, iron-sulfur protein as acceptor"/>
    <property type="evidence" value="ECO:0007669"/>
    <property type="project" value="InterPro"/>
</dbReference>
<dbReference type="Gene3D" id="3.30.70.20">
    <property type="match status" value="1"/>
</dbReference>
<dbReference type="InterPro" id="IPR017896">
    <property type="entry name" value="4Fe4S_Fe-S-bd"/>
</dbReference>
<dbReference type="InterPro" id="IPR017900">
    <property type="entry name" value="4Fe4S_Fe_S_CS"/>
</dbReference>
<dbReference type="InterPro" id="IPR011898">
    <property type="entry name" value="PorD_KorD"/>
</dbReference>
<dbReference type="InterPro" id="IPR053389">
    <property type="entry name" value="Pyruvate_synthase_PorD"/>
</dbReference>
<dbReference type="NCBIfam" id="NF040684">
    <property type="entry name" value="PorD_Arch"/>
    <property type="match status" value="1"/>
</dbReference>
<dbReference type="NCBIfam" id="TIGR02179">
    <property type="entry name" value="PorD_KorD"/>
    <property type="match status" value="1"/>
</dbReference>
<dbReference type="NCBIfam" id="NF007203">
    <property type="entry name" value="PRK09624.1"/>
    <property type="match status" value="1"/>
</dbReference>
<dbReference type="PANTHER" id="PTHR43724">
    <property type="entry name" value="PYRUVATE SYNTHASE SUBUNIT PORD"/>
    <property type="match status" value="1"/>
</dbReference>
<dbReference type="PANTHER" id="PTHR43724:SF2">
    <property type="entry name" value="PYRUVATE SYNTHASE SUBUNIT PORD"/>
    <property type="match status" value="1"/>
</dbReference>
<dbReference type="Pfam" id="PF14697">
    <property type="entry name" value="Fer4_21"/>
    <property type="match status" value="1"/>
</dbReference>
<dbReference type="SUPFAM" id="SSF54862">
    <property type="entry name" value="4Fe-4S ferredoxins"/>
    <property type="match status" value="1"/>
</dbReference>
<dbReference type="PROSITE" id="PS00198">
    <property type="entry name" value="4FE4S_FER_1"/>
    <property type="match status" value="2"/>
</dbReference>
<dbReference type="PROSITE" id="PS51379">
    <property type="entry name" value="4FE4S_FER_2"/>
    <property type="match status" value="2"/>
</dbReference>
<protein>
    <recommendedName>
        <fullName>Pyruvate synthase subunit PorD</fullName>
    </recommendedName>
    <alternativeName>
        <fullName>Pyruvate oxidoreductase delta chain</fullName>
        <shortName>POR</shortName>
    </alternativeName>
    <alternativeName>
        <fullName>Pyruvic-ferredoxin oxidoreductase subunit delta</fullName>
    </alternativeName>
</protein>